<reference key="1">
    <citation type="journal article" date="1996" name="Eur. J. Biochem.">
        <title>Methylcobalamin: coenzyme M methyltransferase isoenzymes MtaA and MtbA from Methanosarcina barkeri. Cloning, sequencing and differential transcription of the encoding genes, and functional overexpression of the mtaA gene in Escherichia coli.</title>
        <authorList>
            <person name="Harms U."/>
            <person name="Thauer R.K."/>
        </authorList>
    </citation>
    <scope>NUCLEOTIDE SEQUENCE [GENOMIC DNA]</scope>
    <scope>PROTEIN SEQUENCE OF 1-21; 39-55 AND 303-32</scope>
    <scope>FUNCTION</scope>
    <source>
        <strain>Fusaro / DSM 804</strain>
    </source>
</reference>
<reference key="2">
    <citation type="journal article" date="2006" name="J. Bacteriol.">
        <title>The Methanosarcina barkeri genome: comparative analysis with Methanosarcina acetivorans and Methanosarcina mazei reveals extensive rearrangement within methanosarcinal genomes.</title>
        <authorList>
            <person name="Maeder D.L."/>
            <person name="Anderson I."/>
            <person name="Brettin T.S."/>
            <person name="Bruce D.C."/>
            <person name="Gilna P."/>
            <person name="Han C.S."/>
            <person name="Lapidus A."/>
            <person name="Metcalf W.W."/>
            <person name="Saunders E."/>
            <person name="Tapia R."/>
            <person name="Sowers K.R."/>
        </authorList>
    </citation>
    <scope>NUCLEOTIDE SEQUENCE [LARGE SCALE GENOMIC DNA]</scope>
    <source>
        <strain>Fusaro / DSM 804</strain>
    </source>
</reference>
<reference key="3">
    <citation type="journal article" date="1984" name="J. Bacteriol.">
        <title>Purification and properties of methanol:5-hydroxybenzimidazolylcobamide methyltransferase from Methanosarcina barkeri.</title>
        <authorList>
            <person name="van der Meijden P."/>
            <person name="te Brommelstroet B.W."/>
            <person name="Poirot C.M."/>
            <person name="van der Drift C."/>
            <person name="Vogels G.D."/>
        </authorList>
    </citation>
    <scope>IDENTIFICATION</scope>
    <source>
        <strain>Fusaro / DSM 804</strain>
    </source>
</reference>
<reference key="4">
    <citation type="journal article" date="1999" name="Eur. J. Biochem.">
        <title>Methanol:coenzyme M methyltransferase from Methanosarcina barkeri -- substitution of the corrinoid harbouring subunit MtaC by free cob(I)alamin.</title>
        <authorList>
            <person name="Sauer K."/>
            <person name="Thauer R.K."/>
        </authorList>
    </citation>
    <scope>FUNCTION</scope>
    <source>
        <strain>Fusaro / DSM 804</strain>
    </source>
</reference>
<reference key="5">
    <citation type="journal article" date="2000" name="Eur. J. Biochem.">
        <title>Methyl-coenzyme M formation in methanogenic archaea. Involvement of zinc in coenzyme M activation.</title>
        <authorList>
            <person name="Sauer K."/>
            <person name="Thauer R.K."/>
        </authorList>
    </citation>
    <scope>COFACTOR</scope>
    <scope>ZINC-BINDING</scope>
    <source>
        <strain>Fusaro / DSM 804</strain>
    </source>
</reference>
<reference key="6">
    <citation type="journal article" date="2002" name="Eur. J. Biochem.">
        <title>The role of zinc in the methylation of the coenzyme M thiol group in methanol:coenzyme M methyltransferase from Methanosarcina barkeri.</title>
        <authorList>
            <person name="Kruer M."/>
            <person name="Haumann M."/>
            <person name="Meyer-Klaucke W."/>
            <person name="Thauer R.K."/>
            <person name="Dau H."/>
        </authorList>
    </citation>
    <scope>COFACTOR</scope>
    <scope>ZINC-BINDING</scope>
    <scope>MUTAGENESIS OF HIS-237 AND CYS-239</scope>
    <source>
        <strain>Fusaro / DSM 804</strain>
    </source>
</reference>
<evidence type="ECO:0000255" key="1"/>
<evidence type="ECO:0000269" key="2">
    <source>
    </source>
</evidence>
<evidence type="ECO:0000269" key="3">
    <source>
    </source>
</evidence>
<evidence type="ECO:0000269" key="4">
    <source>
    </source>
</evidence>
<evidence type="ECO:0000269" key="5">
    <source>
    </source>
</evidence>
<evidence type="ECO:0000305" key="6"/>
<protein>
    <recommendedName>
        <fullName>Methylcobamide:CoM methyltransferase MtaA</fullName>
        <ecNumber>2.1.1.246</ecNumber>
    </recommendedName>
    <alternativeName>
        <fullName>Methylcobalamin: Coenzyme M methyltransferase</fullName>
    </alternativeName>
    <alternativeName>
        <fullName>[Methyl-Co(III) methanol-specific corrinoid protein]:coenzyme M methyltransferase</fullName>
    </alternativeName>
</protein>
<gene>
    <name type="primary">mtaA</name>
    <name type="ordered locus">Mbar_A1054</name>
</gene>
<proteinExistence type="evidence at protein level"/>
<organism>
    <name type="scientific">Methanosarcina barkeri (strain Fusaro / DSM 804)</name>
    <dbReference type="NCBI Taxonomy" id="269797"/>
    <lineage>
        <taxon>Archaea</taxon>
        <taxon>Methanobacteriati</taxon>
        <taxon>Methanobacteriota</taxon>
        <taxon>Stenosarchaea group</taxon>
        <taxon>Methanomicrobia</taxon>
        <taxon>Methanosarcinales</taxon>
        <taxon>Methanosarcinaceae</taxon>
        <taxon>Methanosarcina</taxon>
    </lineage>
</organism>
<keyword id="KW-0903">Direct protein sequencing</keyword>
<keyword id="KW-0479">Metal-binding</keyword>
<keyword id="KW-0484">Methanogenesis</keyword>
<keyword id="KW-0489">Methyltransferase</keyword>
<keyword id="KW-0808">Transferase</keyword>
<keyword id="KW-0862">Zinc</keyword>
<comment type="function">
    <text evidence="2 5">Methyltransferase involved in methanogenesis in the methanol pathway. Catalyzes the transfer of the methyl group from the methylated corrinoid protein MtaC to coenzyme M, forming the substrate for coenzyme-B sulfoethylthiotransferase. MtaC can be substituted by free cob(I)alamin in vitro.</text>
</comment>
<comment type="catalytic activity">
    <reaction>
        <text>methyl-Co(III)-[methanol-specific corrinoid protein] + coenzyme M = Co(I)-[methanol-specific corrinoid protein] + methyl-coenzyme M + H(+)</text>
        <dbReference type="Rhea" id="RHEA:45208"/>
        <dbReference type="Rhea" id="RHEA-COMP:17570"/>
        <dbReference type="Rhea" id="RHEA-COMP:17571"/>
        <dbReference type="ChEBI" id="CHEBI:15378"/>
        <dbReference type="ChEBI" id="CHEBI:16379"/>
        <dbReference type="ChEBI" id="CHEBI:58286"/>
        <dbReference type="ChEBI" id="CHEBI:58319"/>
        <dbReference type="ChEBI" id="CHEBI:60494"/>
        <dbReference type="EC" id="2.1.1.246"/>
    </reaction>
</comment>
<comment type="cofactor">
    <cofactor evidence="3 4">
        <name>Zn(2+)</name>
        <dbReference type="ChEBI" id="CHEBI:29105"/>
    </cofactor>
    <text evidence="3 4">Zn(2+) is involved in coenzyme M activation: in the absence of coenzyme M, zinc is coordinated by a single sulfur ligand and three oxygen or nitrogen ligands. In the presence of coenzyme M, one oxygen/nitrogen-ligand is replaced by sulfur, probably due to ligation of the thiol group of coenzyme M.</text>
</comment>
<comment type="similarity">
    <text evidence="6">Belongs to the uroporphyrinogen decarboxylase family. MtbA/mtaA subfamily.</text>
</comment>
<name>MTAA_METBF</name>
<dbReference type="EC" id="2.1.1.246"/>
<dbReference type="EMBL" id="X91893">
    <property type="protein sequence ID" value="CAA62995.1"/>
    <property type="molecule type" value="Genomic_DNA"/>
</dbReference>
<dbReference type="EMBL" id="CP000099">
    <property type="protein sequence ID" value="AAZ70022.1"/>
    <property type="molecule type" value="Genomic_DNA"/>
</dbReference>
<dbReference type="PIR" id="S62368">
    <property type="entry name" value="S62368"/>
</dbReference>
<dbReference type="SMR" id="Q48949"/>
<dbReference type="STRING" id="269797.Mbar_A1054"/>
<dbReference type="PaxDb" id="269797-Mbar_A1054"/>
<dbReference type="KEGG" id="mba:Mbar_A1054"/>
<dbReference type="eggNOG" id="arCOG03324">
    <property type="taxonomic scope" value="Archaea"/>
</dbReference>
<dbReference type="HOGENOM" id="CLU_040933_2_1_2"/>
<dbReference type="OrthoDB" id="124836at2157"/>
<dbReference type="BioCyc" id="MetaCyc:MTAAMBARK-MONOMER"/>
<dbReference type="BRENDA" id="2.1.1.246">
    <property type="organism ID" value="3250"/>
</dbReference>
<dbReference type="BRENDA" id="2.1.1.90">
    <property type="organism ID" value="3250"/>
</dbReference>
<dbReference type="GO" id="GO:1990088">
    <property type="term" value="F:[methyl-Co(III) methanol-specific corrinoid protein]:coenzyme M methyltransferase"/>
    <property type="evidence" value="ECO:0007669"/>
    <property type="project" value="UniProtKB-EC"/>
</dbReference>
<dbReference type="GO" id="GO:0046872">
    <property type="term" value="F:metal ion binding"/>
    <property type="evidence" value="ECO:0007669"/>
    <property type="project" value="UniProtKB-KW"/>
</dbReference>
<dbReference type="GO" id="GO:0004853">
    <property type="term" value="F:uroporphyrinogen decarboxylase activity"/>
    <property type="evidence" value="ECO:0007669"/>
    <property type="project" value="InterPro"/>
</dbReference>
<dbReference type="GO" id="GO:0015948">
    <property type="term" value="P:methanogenesis"/>
    <property type="evidence" value="ECO:0007669"/>
    <property type="project" value="UniProtKB-KW"/>
</dbReference>
<dbReference type="GO" id="GO:0032259">
    <property type="term" value="P:methylation"/>
    <property type="evidence" value="ECO:0007669"/>
    <property type="project" value="UniProtKB-KW"/>
</dbReference>
<dbReference type="GO" id="GO:0006730">
    <property type="term" value="P:one-carbon metabolic process"/>
    <property type="evidence" value="ECO:0007669"/>
    <property type="project" value="InterPro"/>
</dbReference>
<dbReference type="GO" id="GO:0006779">
    <property type="term" value="P:porphyrin-containing compound biosynthetic process"/>
    <property type="evidence" value="ECO:0007669"/>
    <property type="project" value="InterPro"/>
</dbReference>
<dbReference type="CDD" id="cd03307">
    <property type="entry name" value="Mta_CmuA_like"/>
    <property type="match status" value="1"/>
</dbReference>
<dbReference type="Gene3D" id="3.20.20.210">
    <property type="match status" value="1"/>
</dbReference>
<dbReference type="InterPro" id="IPR052024">
    <property type="entry name" value="Methanogen_methyltrans"/>
</dbReference>
<dbReference type="InterPro" id="IPR006360">
    <property type="entry name" value="Mtase_MtaA_CmuA"/>
</dbReference>
<dbReference type="InterPro" id="IPR038071">
    <property type="entry name" value="UROD/MetE-like_sf"/>
</dbReference>
<dbReference type="InterPro" id="IPR000257">
    <property type="entry name" value="Uroporphyrinogen_deCOase"/>
</dbReference>
<dbReference type="NCBIfam" id="TIGR01463">
    <property type="entry name" value="mtaA_cmuA"/>
    <property type="match status" value="1"/>
</dbReference>
<dbReference type="NCBIfam" id="NF040654">
    <property type="entry name" value="MtaA_Meth"/>
    <property type="match status" value="1"/>
</dbReference>
<dbReference type="NCBIfam" id="NF004889">
    <property type="entry name" value="PRK06252.1"/>
    <property type="match status" value="1"/>
</dbReference>
<dbReference type="PANTHER" id="PTHR47099">
    <property type="entry name" value="METHYLCOBAMIDE:COM METHYLTRANSFERASE MTBA"/>
    <property type="match status" value="1"/>
</dbReference>
<dbReference type="PANTHER" id="PTHR47099:SF1">
    <property type="entry name" value="METHYLCOBAMIDE:COM METHYLTRANSFERASE MTBA"/>
    <property type="match status" value="1"/>
</dbReference>
<dbReference type="Pfam" id="PF01208">
    <property type="entry name" value="URO-D"/>
    <property type="match status" value="1"/>
</dbReference>
<dbReference type="SUPFAM" id="SSF51726">
    <property type="entry name" value="UROD/MetE-like"/>
    <property type="match status" value="1"/>
</dbReference>
<feature type="chain" id="PRO_0000418939" description="Methylcobamide:CoM methyltransferase MtaA">
    <location>
        <begin position="1"/>
        <end position="339"/>
    </location>
</feature>
<feature type="binding site" evidence="6">
    <location>
        <position position="237"/>
    </location>
    <ligand>
        <name>Zn(2+)</name>
        <dbReference type="ChEBI" id="CHEBI:29105"/>
    </ligand>
</feature>
<feature type="binding site" evidence="6">
    <location>
        <position position="239"/>
    </location>
    <ligand>
        <name>Zn(2+)</name>
        <dbReference type="ChEBI" id="CHEBI:29105"/>
    </ligand>
</feature>
<feature type="binding site" evidence="1">
    <location>
        <position position="316"/>
    </location>
    <ligand>
        <name>Zn(2+)</name>
        <dbReference type="ChEBI" id="CHEBI:29105"/>
    </ligand>
</feature>
<feature type="mutagenesis site" description="Strongly impaired methyltransferase activity." evidence="4">
    <original>H</original>
    <variation>A</variation>
    <location>
        <position position="237"/>
    </location>
</feature>
<feature type="mutagenesis site" description="Strongly impaired methyltransferase activity." evidence="4">
    <original>C</original>
    <variation>A</variation>
    <location>
        <position position="239"/>
    </location>
</feature>
<accession>Q48949</accession>
<accession>Q46DM0</accession>
<sequence length="339" mass="35872">MSEFTLKTRLLAALEGKPVDKVPVCSVTQTGIVELMDKVGAAWPEAHTNPELMAKLAIANYELSGLEAVRLPYCLTVLGEAMGCEINMGTKNRQPSVTASPYPKNLDGAVVPADLLQRNRIPAVLEAIKIVREKVGPDVPIIGGMEGPVTLASDLISVKSFMKWSIKKTDLFEQALDISAEAAIAYANAMVEAGADVIAIADPVASPDLMSPETFKQFLQSRLQKFSAGVNSVTVLHICGKVNAILSDMADCGFEGLSVEEKIGTAAEGKKIIGDRARLVGNISSPFTLLPGPIDKIKAEAKVALEGGIDVLAPGCGIAPMTPLENVKALVAARDEYYA</sequence>